<name>ISLR2_HUMAN</name>
<gene>
    <name type="primary">ISLR2</name>
    <name type="synonym">KIAA1465</name>
    <name type="synonym">LINX</name>
    <name type="ORF">UNQ1885/PRO4329</name>
</gene>
<keyword id="KW-1003">Cell membrane</keyword>
<keyword id="KW-0217">Developmental protein</keyword>
<keyword id="KW-1015">Disulfide bond</keyword>
<keyword id="KW-0325">Glycoprotein</keyword>
<keyword id="KW-0393">Immunoglobulin domain</keyword>
<keyword id="KW-0433">Leucine-rich repeat</keyword>
<keyword id="KW-0472">Membrane</keyword>
<keyword id="KW-0524">Neurogenesis</keyword>
<keyword id="KW-0597">Phosphoprotein</keyword>
<keyword id="KW-1267">Proteomics identification</keyword>
<keyword id="KW-1185">Reference proteome</keyword>
<keyword id="KW-0677">Repeat</keyword>
<keyword id="KW-0732">Signal</keyword>
<keyword id="KW-0812">Transmembrane</keyword>
<keyword id="KW-1133">Transmembrane helix</keyword>
<comment type="function">
    <text evidence="1">Required for axon extension during neural development.</text>
</comment>
<comment type="subunit">
    <text evidence="1">Homomultimer. Interacts with NTRK1/TrkA (By similarity).</text>
</comment>
<comment type="interaction">
    <interactant intactId="EBI-1266923">
        <id>Q6UXK2</id>
    </interactant>
    <interactant intactId="EBI-4319440">
        <id>P54849</id>
        <label>EMP1</label>
    </interactant>
    <organismsDiffer>false</organismsDiffer>
    <experiments>3</experiments>
</comment>
<comment type="interaction">
    <interactant intactId="EBI-1266923">
        <id>Q6UXK2</id>
    </interactant>
    <interactant intactId="EBI-3267258">
        <id>Q86VI4</id>
        <label>LAPTM4B</label>
    </interactant>
    <organismsDiffer>false</organismsDiffer>
    <experiments>3</experiments>
</comment>
<comment type="interaction">
    <interactant intactId="EBI-1266923">
        <id>Q6UXK2</id>
    </interactant>
    <interactant intactId="EBI-9537218">
        <id>Q96G30</id>
        <label>MRAP2</label>
    </interactant>
    <organismsDiffer>false</organismsDiffer>
    <experiments>3</experiments>
</comment>
<comment type="interaction">
    <interactant intactId="EBI-1266923">
        <id>Q6UXK2</id>
    </interactant>
    <interactant intactId="EBI-3919611">
        <id>Q16617</id>
        <label>NKG7</label>
    </interactant>
    <organismsDiffer>false</organismsDiffer>
    <experiments>3</experiments>
</comment>
<comment type="interaction">
    <interactant intactId="EBI-1266923">
        <id>Q6UXK2</id>
    </interactant>
    <interactant intactId="EBI-12200293">
        <id>P0DN84</id>
        <label>STRIT1</label>
    </interactant>
    <organismsDiffer>false</organismsDiffer>
    <experiments>3</experiments>
</comment>
<comment type="interaction">
    <interactant intactId="EBI-1266923">
        <id>Q6UXK2</id>
    </interactant>
    <interactant intactId="EBI-12237619">
        <id>O75841</id>
        <label>UPK1B</label>
    </interactant>
    <organismsDiffer>false</organismsDiffer>
    <experiments>3</experiments>
</comment>
<comment type="subcellular location">
    <subcellularLocation>
        <location evidence="1">Cell membrane</location>
        <topology evidence="1">Single-pass membrane protein</topology>
    </subcellularLocation>
</comment>
<comment type="sequence caution" evidence="6">
    <conflict type="erroneous initiation">
        <sequence resource="EMBL-CDS" id="BAA95989"/>
    </conflict>
</comment>
<evidence type="ECO:0000250" key="1"/>
<evidence type="ECO:0000250" key="2">
    <source>
        <dbReference type="UniProtKB" id="Q5RKR3"/>
    </source>
</evidence>
<evidence type="ECO:0000255" key="3"/>
<evidence type="ECO:0000255" key="4">
    <source>
        <dbReference type="PROSITE-ProRule" id="PRU00114"/>
    </source>
</evidence>
<evidence type="ECO:0000256" key="5">
    <source>
        <dbReference type="SAM" id="MobiDB-lite"/>
    </source>
</evidence>
<evidence type="ECO:0000305" key="6"/>
<dbReference type="EMBL" id="AB040898">
    <property type="protein sequence ID" value="BAA95989.2"/>
    <property type="status" value="ALT_INIT"/>
    <property type="molecule type" value="mRNA"/>
</dbReference>
<dbReference type="EMBL" id="AY358316">
    <property type="protein sequence ID" value="AAQ88682.1"/>
    <property type="molecule type" value="mRNA"/>
</dbReference>
<dbReference type="EMBL" id="AK290467">
    <property type="protein sequence ID" value="BAF83156.1"/>
    <property type="molecule type" value="mRNA"/>
</dbReference>
<dbReference type="CCDS" id="CCDS10259.1"/>
<dbReference type="RefSeq" id="NP_001123608.1">
    <property type="nucleotide sequence ID" value="NM_001130136.1"/>
</dbReference>
<dbReference type="RefSeq" id="NP_001123609.1">
    <property type="nucleotide sequence ID" value="NM_001130137.1"/>
</dbReference>
<dbReference type="RefSeq" id="NP_001123610.1">
    <property type="nucleotide sequence ID" value="NM_001130138.2"/>
</dbReference>
<dbReference type="RefSeq" id="NP_065902.1">
    <property type="nucleotide sequence ID" value="NM_020851.3"/>
</dbReference>
<dbReference type="RefSeq" id="XP_011520142.1">
    <property type="nucleotide sequence ID" value="XM_011521840.4"/>
</dbReference>
<dbReference type="RefSeq" id="XP_011520143.1">
    <property type="nucleotide sequence ID" value="XM_011521841.2"/>
</dbReference>
<dbReference type="RefSeq" id="XP_024305771.1">
    <property type="nucleotide sequence ID" value="XM_024450003.2"/>
</dbReference>
<dbReference type="RefSeq" id="XP_024305772.1">
    <property type="nucleotide sequence ID" value="XM_024450004.2"/>
</dbReference>
<dbReference type="RefSeq" id="XP_024305773.1">
    <property type="nucleotide sequence ID" value="XM_024450005.2"/>
</dbReference>
<dbReference type="RefSeq" id="XP_024305774.1">
    <property type="nucleotide sequence ID" value="XM_024450006.2"/>
</dbReference>
<dbReference type="RefSeq" id="XP_024305775.1">
    <property type="nucleotide sequence ID" value="XM_024450007.2"/>
</dbReference>
<dbReference type="RefSeq" id="XP_024305776.1">
    <property type="nucleotide sequence ID" value="XM_024450008.2"/>
</dbReference>
<dbReference type="RefSeq" id="XP_047288861.1">
    <property type="nucleotide sequence ID" value="XM_047432905.1"/>
</dbReference>
<dbReference type="RefSeq" id="XP_054234506.1">
    <property type="nucleotide sequence ID" value="XM_054378531.1"/>
</dbReference>
<dbReference type="RefSeq" id="XP_054234507.1">
    <property type="nucleotide sequence ID" value="XM_054378532.1"/>
</dbReference>
<dbReference type="RefSeq" id="XP_054234508.1">
    <property type="nucleotide sequence ID" value="XM_054378533.1"/>
</dbReference>
<dbReference type="RefSeq" id="XP_054234509.1">
    <property type="nucleotide sequence ID" value="XM_054378534.1"/>
</dbReference>
<dbReference type="RefSeq" id="XP_054234510.1">
    <property type="nucleotide sequence ID" value="XM_054378535.1"/>
</dbReference>
<dbReference type="RefSeq" id="XP_054234511.1">
    <property type="nucleotide sequence ID" value="XM_054378536.1"/>
</dbReference>
<dbReference type="RefSeq" id="XP_054234512.1">
    <property type="nucleotide sequence ID" value="XM_054378537.1"/>
</dbReference>
<dbReference type="RefSeq" id="XP_054234513.1">
    <property type="nucleotide sequence ID" value="XM_054378538.1"/>
</dbReference>
<dbReference type="RefSeq" id="XP_054234514.1">
    <property type="nucleotide sequence ID" value="XM_054378539.1"/>
</dbReference>
<dbReference type="SMR" id="Q6UXK2"/>
<dbReference type="BioGRID" id="121658">
    <property type="interactions" value="8"/>
</dbReference>
<dbReference type="CORUM" id="Q6UXK2"/>
<dbReference type="FunCoup" id="Q6UXK2">
    <property type="interactions" value="22"/>
</dbReference>
<dbReference type="IntAct" id="Q6UXK2">
    <property type="interactions" value="12"/>
</dbReference>
<dbReference type="MINT" id="Q6UXK2"/>
<dbReference type="STRING" id="9606.ENSP00000355402"/>
<dbReference type="GlyCosmos" id="Q6UXK2">
    <property type="glycosylation" value="6 sites, No reported glycans"/>
</dbReference>
<dbReference type="GlyGen" id="Q6UXK2">
    <property type="glycosylation" value="7 sites, 1 N-linked glycan (1 site)"/>
</dbReference>
<dbReference type="iPTMnet" id="Q6UXK2"/>
<dbReference type="PhosphoSitePlus" id="Q6UXK2"/>
<dbReference type="BioMuta" id="ISLR2"/>
<dbReference type="DMDM" id="74758577"/>
<dbReference type="MassIVE" id="Q6UXK2"/>
<dbReference type="PaxDb" id="9606-ENSP00000355402"/>
<dbReference type="PeptideAtlas" id="Q6UXK2"/>
<dbReference type="ProteomicsDB" id="67633"/>
<dbReference type="Antibodypedia" id="26861">
    <property type="antibodies" value="80 antibodies from 19 providers"/>
</dbReference>
<dbReference type="DNASU" id="57611"/>
<dbReference type="Ensembl" id="ENST00000361742.7">
    <property type="protein sequence ID" value="ENSP00000355402.3"/>
    <property type="gene ID" value="ENSG00000167178.17"/>
</dbReference>
<dbReference type="Ensembl" id="ENST00000435464.5">
    <property type="protein sequence ID" value="ENSP00000411443.1"/>
    <property type="gene ID" value="ENSG00000167178.17"/>
</dbReference>
<dbReference type="Ensembl" id="ENST00000453268.3">
    <property type="protein sequence ID" value="ENSP00000411834.2"/>
    <property type="gene ID" value="ENSG00000167178.17"/>
</dbReference>
<dbReference type="Ensembl" id="ENST00000565159.5">
    <property type="protein sequence ID" value="ENSP00000455531.1"/>
    <property type="gene ID" value="ENSG00000167178.17"/>
</dbReference>
<dbReference type="Ensembl" id="ENST00000565540.1">
    <property type="protein sequence ID" value="ENSP00000458080.1"/>
    <property type="gene ID" value="ENSG00000167178.17"/>
</dbReference>
<dbReference type="GeneID" id="57611"/>
<dbReference type="KEGG" id="hsa:57611"/>
<dbReference type="MANE-Select" id="ENST00000453268.3">
    <property type="protein sequence ID" value="ENSP00000411834.2"/>
    <property type="RefSeq nucleotide sequence ID" value="NM_020851.3"/>
    <property type="RefSeq protein sequence ID" value="NP_065902.1"/>
</dbReference>
<dbReference type="UCSC" id="uc002axd.3">
    <property type="organism name" value="human"/>
</dbReference>
<dbReference type="AGR" id="HGNC:29286"/>
<dbReference type="CTD" id="57611"/>
<dbReference type="DisGeNET" id="57611"/>
<dbReference type="GeneCards" id="ISLR2"/>
<dbReference type="HGNC" id="HGNC:29286">
    <property type="gene designation" value="ISLR2"/>
</dbReference>
<dbReference type="HPA" id="ENSG00000167178">
    <property type="expression patterns" value="Tissue enhanced (brain, testis)"/>
</dbReference>
<dbReference type="MIM" id="614179">
    <property type="type" value="gene"/>
</dbReference>
<dbReference type="neXtProt" id="NX_Q6UXK2"/>
<dbReference type="OpenTargets" id="ENSG00000167178"/>
<dbReference type="PharmGKB" id="PA143485505"/>
<dbReference type="VEuPathDB" id="HostDB:ENSG00000167178"/>
<dbReference type="eggNOG" id="KOG0619">
    <property type="taxonomic scope" value="Eukaryota"/>
</dbReference>
<dbReference type="GeneTree" id="ENSGT00940000162846"/>
<dbReference type="HOGENOM" id="CLU_400948_0_0_1"/>
<dbReference type="InParanoid" id="Q6UXK2"/>
<dbReference type="OMA" id="GHSMVQW"/>
<dbReference type="OrthoDB" id="2151624at2759"/>
<dbReference type="PAN-GO" id="Q6UXK2">
    <property type="GO annotations" value="2 GO annotations based on evolutionary models"/>
</dbReference>
<dbReference type="PhylomeDB" id="Q6UXK2"/>
<dbReference type="TreeFam" id="TF351112"/>
<dbReference type="PathwayCommons" id="Q6UXK2"/>
<dbReference type="SignaLink" id="Q6UXK2"/>
<dbReference type="BioGRID-ORCS" id="57611">
    <property type="hits" value="16 hits in 1142 CRISPR screens"/>
</dbReference>
<dbReference type="ChiTaRS" id="ISLR2">
    <property type="organism name" value="human"/>
</dbReference>
<dbReference type="GenomeRNAi" id="57611"/>
<dbReference type="Pharos" id="Q6UXK2">
    <property type="development level" value="Tbio"/>
</dbReference>
<dbReference type="PRO" id="PR:Q6UXK2"/>
<dbReference type="Proteomes" id="UP000005640">
    <property type="component" value="Chromosome 15"/>
</dbReference>
<dbReference type="RNAct" id="Q6UXK2">
    <property type="molecule type" value="protein"/>
</dbReference>
<dbReference type="Bgee" id="ENSG00000167178">
    <property type="expression patterns" value="Expressed in cortical plate and 97 other cell types or tissues"/>
</dbReference>
<dbReference type="ExpressionAtlas" id="Q6UXK2">
    <property type="expression patterns" value="baseline and differential"/>
</dbReference>
<dbReference type="GO" id="GO:0009986">
    <property type="term" value="C:cell surface"/>
    <property type="evidence" value="ECO:0000250"/>
    <property type="project" value="UniProtKB"/>
</dbReference>
<dbReference type="GO" id="GO:0005886">
    <property type="term" value="C:plasma membrane"/>
    <property type="evidence" value="ECO:0007669"/>
    <property type="project" value="UniProtKB-SubCell"/>
</dbReference>
<dbReference type="GO" id="GO:0007399">
    <property type="term" value="P:nervous system development"/>
    <property type="evidence" value="ECO:0007669"/>
    <property type="project" value="UniProtKB-KW"/>
</dbReference>
<dbReference type="GO" id="GO:0045773">
    <property type="term" value="P:positive regulation of axon extension"/>
    <property type="evidence" value="ECO:0000250"/>
    <property type="project" value="UniProtKB"/>
</dbReference>
<dbReference type="FunFam" id="2.60.40.10:FF:001899">
    <property type="entry name" value="Immunoglobulin superfamily containing leucine rich repeat 2"/>
    <property type="match status" value="1"/>
</dbReference>
<dbReference type="FunFam" id="3.80.10.10:FF:000058">
    <property type="entry name" value="immunoglobulin superfamily containing leucine-rich repeat protein 2"/>
    <property type="match status" value="1"/>
</dbReference>
<dbReference type="Gene3D" id="2.60.40.10">
    <property type="entry name" value="Immunoglobulins"/>
    <property type="match status" value="1"/>
</dbReference>
<dbReference type="Gene3D" id="3.80.10.10">
    <property type="entry name" value="Ribonuclease Inhibitor"/>
    <property type="match status" value="1"/>
</dbReference>
<dbReference type="InterPro" id="IPR000483">
    <property type="entry name" value="Cys-rich_flank_reg_C"/>
</dbReference>
<dbReference type="InterPro" id="IPR007110">
    <property type="entry name" value="Ig-like_dom"/>
</dbReference>
<dbReference type="InterPro" id="IPR036179">
    <property type="entry name" value="Ig-like_dom_sf"/>
</dbReference>
<dbReference type="InterPro" id="IPR013783">
    <property type="entry name" value="Ig-like_fold"/>
</dbReference>
<dbReference type="InterPro" id="IPR001611">
    <property type="entry name" value="Leu-rich_rpt"/>
</dbReference>
<dbReference type="InterPro" id="IPR003591">
    <property type="entry name" value="Leu-rich_rpt_typical-subtyp"/>
</dbReference>
<dbReference type="InterPro" id="IPR032675">
    <property type="entry name" value="LRR_dom_sf"/>
</dbReference>
<dbReference type="PANTHER" id="PTHR24366">
    <property type="entry name" value="IG(IMMUNOGLOBULIN) AND LRR(LEUCINE RICH REPEAT) DOMAINS"/>
    <property type="match status" value="1"/>
</dbReference>
<dbReference type="PANTHER" id="PTHR24366:SF15">
    <property type="entry name" value="IMMUNOGLOBULIN SUPERFAMILY CONTAINING LEUCINE-RICH REPEAT PROTEIN 2"/>
    <property type="match status" value="1"/>
</dbReference>
<dbReference type="Pfam" id="PF13855">
    <property type="entry name" value="LRR_8"/>
    <property type="match status" value="2"/>
</dbReference>
<dbReference type="SMART" id="SM00369">
    <property type="entry name" value="LRR_TYP"/>
    <property type="match status" value="5"/>
</dbReference>
<dbReference type="SMART" id="SM00082">
    <property type="entry name" value="LRRCT"/>
    <property type="match status" value="1"/>
</dbReference>
<dbReference type="SUPFAM" id="SSF48726">
    <property type="entry name" value="Immunoglobulin"/>
    <property type="match status" value="1"/>
</dbReference>
<dbReference type="SUPFAM" id="SSF52058">
    <property type="entry name" value="L domain-like"/>
    <property type="match status" value="1"/>
</dbReference>
<dbReference type="PROSITE" id="PS50835">
    <property type="entry name" value="IG_LIKE"/>
    <property type="match status" value="1"/>
</dbReference>
<dbReference type="PROSITE" id="PS51450">
    <property type="entry name" value="LRR"/>
    <property type="match status" value="6"/>
</dbReference>
<accession>Q6UXK2</accession>
<accession>A8K352</accession>
<accession>Q9P263</accession>
<reference key="1">
    <citation type="journal article" date="2000" name="DNA Res.">
        <title>Prediction of the coding sequences of unidentified human genes. XVII. The complete sequences of 100 new cDNA clones from brain which code for large proteins in vitro.</title>
        <authorList>
            <person name="Nagase T."/>
            <person name="Kikuno R."/>
            <person name="Ishikawa K."/>
            <person name="Hirosawa M."/>
            <person name="Ohara O."/>
        </authorList>
    </citation>
    <scope>NUCLEOTIDE SEQUENCE [LARGE SCALE MRNA]</scope>
    <source>
        <tissue>Brain</tissue>
    </source>
</reference>
<reference key="2">
    <citation type="journal article" date="2002" name="DNA Res.">
        <title>Construction of expression-ready cDNA clones for KIAA genes: manual curation of 330 KIAA cDNA clones.</title>
        <authorList>
            <person name="Nakajima D."/>
            <person name="Okazaki N."/>
            <person name="Yamakawa H."/>
            <person name="Kikuno R."/>
            <person name="Ohara O."/>
            <person name="Nagase T."/>
        </authorList>
    </citation>
    <scope>SEQUENCE REVISION</scope>
</reference>
<reference key="3">
    <citation type="journal article" date="2003" name="Genome Res.">
        <title>The secreted protein discovery initiative (SPDI), a large-scale effort to identify novel human secreted and transmembrane proteins: a bioinformatics assessment.</title>
        <authorList>
            <person name="Clark H.F."/>
            <person name="Gurney A.L."/>
            <person name="Abaya E."/>
            <person name="Baker K."/>
            <person name="Baldwin D.T."/>
            <person name="Brush J."/>
            <person name="Chen J."/>
            <person name="Chow B."/>
            <person name="Chui C."/>
            <person name="Crowley C."/>
            <person name="Currell B."/>
            <person name="Deuel B."/>
            <person name="Dowd P."/>
            <person name="Eaton D."/>
            <person name="Foster J.S."/>
            <person name="Grimaldi C."/>
            <person name="Gu Q."/>
            <person name="Hass P.E."/>
            <person name="Heldens S."/>
            <person name="Huang A."/>
            <person name="Kim H.S."/>
            <person name="Klimowski L."/>
            <person name="Jin Y."/>
            <person name="Johnson S."/>
            <person name="Lee J."/>
            <person name="Lewis L."/>
            <person name="Liao D."/>
            <person name="Mark M.R."/>
            <person name="Robbie E."/>
            <person name="Sanchez C."/>
            <person name="Schoenfeld J."/>
            <person name="Seshagiri S."/>
            <person name="Simmons L."/>
            <person name="Singh J."/>
            <person name="Smith V."/>
            <person name="Stinson J."/>
            <person name="Vagts A."/>
            <person name="Vandlen R.L."/>
            <person name="Watanabe C."/>
            <person name="Wieand D."/>
            <person name="Woods K."/>
            <person name="Xie M.-H."/>
            <person name="Yansura D.G."/>
            <person name="Yi S."/>
            <person name="Yu G."/>
            <person name="Yuan J."/>
            <person name="Zhang M."/>
            <person name="Zhang Z."/>
            <person name="Goddard A.D."/>
            <person name="Wood W.I."/>
            <person name="Godowski P.J."/>
            <person name="Gray A.M."/>
        </authorList>
    </citation>
    <scope>NUCLEOTIDE SEQUENCE [LARGE SCALE MRNA]</scope>
</reference>
<reference key="4">
    <citation type="journal article" date="2004" name="Nat. Genet.">
        <title>Complete sequencing and characterization of 21,243 full-length human cDNAs.</title>
        <authorList>
            <person name="Ota T."/>
            <person name="Suzuki Y."/>
            <person name="Nishikawa T."/>
            <person name="Otsuki T."/>
            <person name="Sugiyama T."/>
            <person name="Irie R."/>
            <person name="Wakamatsu A."/>
            <person name="Hayashi K."/>
            <person name="Sato H."/>
            <person name="Nagai K."/>
            <person name="Kimura K."/>
            <person name="Makita H."/>
            <person name="Sekine M."/>
            <person name="Obayashi M."/>
            <person name="Nishi T."/>
            <person name="Shibahara T."/>
            <person name="Tanaka T."/>
            <person name="Ishii S."/>
            <person name="Yamamoto J."/>
            <person name="Saito K."/>
            <person name="Kawai Y."/>
            <person name="Isono Y."/>
            <person name="Nakamura Y."/>
            <person name="Nagahari K."/>
            <person name="Murakami K."/>
            <person name="Yasuda T."/>
            <person name="Iwayanagi T."/>
            <person name="Wagatsuma M."/>
            <person name="Shiratori A."/>
            <person name="Sudo H."/>
            <person name="Hosoiri T."/>
            <person name="Kaku Y."/>
            <person name="Kodaira H."/>
            <person name="Kondo H."/>
            <person name="Sugawara M."/>
            <person name="Takahashi M."/>
            <person name="Kanda K."/>
            <person name="Yokoi T."/>
            <person name="Furuya T."/>
            <person name="Kikkawa E."/>
            <person name="Omura Y."/>
            <person name="Abe K."/>
            <person name="Kamihara K."/>
            <person name="Katsuta N."/>
            <person name="Sato K."/>
            <person name="Tanikawa M."/>
            <person name="Yamazaki M."/>
            <person name="Ninomiya K."/>
            <person name="Ishibashi T."/>
            <person name="Yamashita H."/>
            <person name="Murakawa K."/>
            <person name="Fujimori K."/>
            <person name="Tanai H."/>
            <person name="Kimata M."/>
            <person name="Watanabe M."/>
            <person name="Hiraoka S."/>
            <person name="Chiba Y."/>
            <person name="Ishida S."/>
            <person name="Ono Y."/>
            <person name="Takiguchi S."/>
            <person name="Watanabe S."/>
            <person name="Yosida M."/>
            <person name="Hotuta T."/>
            <person name="Kusano J."/>
            <person name="Kanehori K."/>
            <person name="Takahashi-Fujii A."/>
            <person name="Hara H."/>
            <person name="Tanase T.-O."/>
            <person name="Nomura Y."/>
            <person name="Togiya S."/>
            <person name="Komai F."/>
            <person name="Hara R."/>
            <person name="Takeuchi K."/>
            <person name="Arita M."/>
            <person name="Imose N."/>
            <person name="Musashino K."/>
            <person name="Yuuki H."/>
            <person name="Oshima A."/>
            <person name="Sasaki N."/>
            <person name="Aotsuka S."/>
            <person name="Yoshikawa Y."/>
            <person name="Matsunawa H."/>
            <person name="Ichihara T."/>
            <person name="Shiohata N."/>
            <person name="Sano S."/>
            <person name="Moriya S."/>
            <person name="Momiyama H."/>
            <person name="Satoh N."/>
            <person name="Takami S."/>
            <person name="Terashima Y."/>
            <person name="Suzuki O."/>
            <person name="Nakagawa S."/>
            <person name="Senoh A."/>
            <person name="Mizoguchi H."/>
            <person name="Goto Y."/>
            <person name="Shimizu F."/>
            <person name="Wakebe H."/>
            <person name="Hishigaki H."/>
            <person name="Watanabe T."/>
            <person name="Sugiyama A."/>
            <person name="Takemoto M."/>
            <person name="Kawakami B."/>
            <person name="Yamazaki M."/>
            <person name="Watanabe K."/>
            <person name="Kumagai A."/>
            <person name="Itakura S."/>
            <person name="Fukuzumi Y."/>
            <person name="Fujimori Y."/>
            <person name="Komiyama M."/>
            <person name="Tashiro H."/>
            <person name="Tanigami A."/>
            <person name="Fujiwara T."/>
            <person name="Ono T."/>
            <person name="Yamada K."/>
            <person name="Fujii Y."/>
            <person name="Ozaki K."/>
            <person name="Hirao M."/>
            <person name="Ohmori Y."/>
            <person name="Kawabata A."/>
            <person name="Hikiji T."/>
            <person name="Kobatake N."/>
            <person name="Inagaki H."/>
            <person name="Ikema Y."/>
            <person name="Okamoto S."/>
            <person name="Okitani R."/>
            <person name="Kawakami T."/>
            <person name="Noguchi S."/>
            <person name="Itoh T."/>
            <person name="Shigeta K."/>
            <person name="Senba T."/>
            <person name="Matsumura K."/>
            <person name="Nakajima Y."/>
            <person name="Mizuno T."/>
            <person name="Morinaga M."/>
            <person name="Sasaki M."/>
            <person name="Togashi T."/>
            <person name="Oyama M."/>
            <person name="Hata H."/>
            <person name="Watanabe M."/>
            <person name="Komatsu T."/>
            <person name="Mizushima-Sugano J."/>
            <person name="Satoh T."/>
            <person name="Shirai Y."/>
            <person name="Takahashi Y."/>
            <person name="Nakagawa K."/>
            <person name="Okumura K."/>
            <person name="Nagase T."/>
            <person name="Nomura N."/>
            <person name="Kikuchi H."/>
            <person name="Masuho Y."/>
            <person name="Yamashita R."/>
            <person name="Nakai K."/>
            <person name="Yada T."/>
            <person name="Nakamura Y."/>
            <person name="Ohara O."/>
            <person name="Isogai T."/>
            <person name="Sugano S."/>
        </authorList>
    </citation>
    <scope>NUCLEOTIDE SEQUENCE [LARGE SCALE MRNA]</scope>
    <source>
        <tissue>Brain</tissue>
    </source>
</reference>
<feature type="signal peptide" evidence="3">
    <location>
        <begin position="1"/>
        <end position="18"/>
    </location>
</feature>
<feature type="chain" id="PRO_0000317498" description="Immunoglobulin superfamily containing leucine-rich repeat protein 2">
    <location>
        <begin position="19"/>
        <end position="745"/>
    </location>
</feature>
<feature type="topological domain" description="Extracellular" evidence="3">
    <location>
        <begin position="19"/>
        <end position="589"/>
    </location>
</feature>
<feature type="transmembrane region" description="Helical" evidence="3">
    <location>
        <begin position="590"/>
        <end position="610"/>
    </location>
</feature>
<feature type="topological domain" description="Cytoplasmic" evidence="3">
    <location>
        <begin position="611"/>
        <end position="745"/>
    </location>
</feature>
<feature type="domain" description="LRRNT">
    <location>
        <begin position="19"/>
        <end position="51"/>
    </location>
</feature>
<feature type="repeat" description="LRR 1">
    <location>
        <begin position="52"/>
        <end position="73"/>
    </location>
</feature>
<feature type="repeat" description="LRR 2">
    <location>
        <begin position="76"/>
        <end position="97"/>
    </location>
</feature>
<feature type="repeat" description="LRR 3">
    <location>
        <begin position="100"/>
        <end position="123"/>
    </location>
</feature>
<feature type="repeat" description="LRR 4">
    <location>
        <begin position="124"/>
        <end position="145"/>
    </location>
</feature>
<feature type="repeat" description="LRR 5">
    <location>
        <begin position="148"/>
        <end position="169"/>
    </location>
</feature>
<feature type="domain" description="LRRCT">
    <location>
        <begin position="181"/>
        <end position="232"/>
    </location>
</feature>
<feature type="domain" description="Ig-like">
    <location>
        <begin position="233"/>
        <end position="371"/>
    </location>
</feature>
<feature type="region of interest" description="Disordered" evidence="5">
    <location>
        <begin position="287"/>
        <end position="326"/>
    </location>
</feature>
<feature type="region of interest" description="Disordered" evidence="5">
    <location>
        <begin position="375"/>
        <end position="466"/>
    </location>
</feature>
<feature type="region of interest" description="Disordered" evidence="5">
    <location>
        <begin position="656"/>
        <end position="722"/>
    </location>
</feature>
<feature type="compositionally biased region" description="Acidic residues" evidence="5">
    <location>
        <begin position="290"/>
        <end position="306"/>
    </location>
</feature>
<feature type="compositionally biased region" description="Acidic residues" evidence="5">
    <location>
        <begin position="431"/>
        <end position="449"/>
    </location>
</feature>
<feature type="compositionally biased region" description="Acidic residues" evidence="5">
    <location>
        <begin position="665"/>
        <end position="683"/>
    </location>
</feature>
<feature type="modified residue" description="Phosphotyrosine" evidence="2">
    <location>
        <position position="719"/>
    </location>
</feature>
<feature type="modified residue" description="Phosphoserine" evidence="2">
    <location>
        <position position="720"/>
    </location>
</feature>
<feature type="glycosylation site" description="N-linked (GlcNAc...) asparagine" evidence="3">
    <location>
        <position position="52"/>
    </location>
</feature>
<feature type="glycosylation site" description="N-linked (GlcNAc...) asparagine" evidence="3">
    <location>
        <position position="121"/>
    </location>
</feature>
<feature type="glycosylation site" description="N-linked (GlcNAc...) asparagine" evidence="3">
    <location>
        <position position="337"/>
    </location>
</feature>
<feature type="glycosylation site" description="N-linked (GlcNAc...) asparagine" evidence="3">
    <location>
        <position position="364"/>
    </location>
</feature>
<feature type="glycosylation site" description="N-linked (GlcNAc...) asparagine" evidence="3">
    <location>
        <position position="474"/>
    </location>
</feature>
<feature type="glycosylation site" description="N-linked (GlcNAc...) asparagine" evidence="3">
    <location>
        <position position="563"/>
    </location>
</feature>
<feature type="disulfide bond" evidence="4">
    <location>
        <begin position="260"/>
        <end position="355"/>
    </location>
</feature>
<feature type="sequence variant" id="VAR_049881" description="In dbSNP:rs3889598.">
    <original>S</original>
    <variation>F</variation>
    <location>
        <position position="137"/>
    </location>
</feature>
<feature type="sequence conflict" description="In Ref. 4; BAF83156." evidence="6" ref="4">
    <original>S</original>
    <variation>P</variation>
    <location>
        <position position="19"/>
    </location>
</feature>
<organism>
    <name type="scientific">Homo sapiens</name>
    <name type="common">Human</name>
    <dbReference type="NCBI Taxonomy" id="9606"/>
    <lineage>
        <taxon>Eukaryota</taxon>
        <taxon>Metazoa</taxon>
        <taxon>Chordata</taxon>
        <taxon>Craniata</taxon>
        <taxon>Vertebrata</taxon>
        <taxon>Euteleostomi</taxon>
        <taxon>Mammalia</taxon>
        <taxon>Eutheria</taxon>
        <taxon>Euarchontoglires</taxon>
        <taxon>Primates</taxon>
        <taxon>Haplorrhini</taxon>
        <taxon>Catarrhini</taxon>
        <taxon>Hominidae</taxon>
        <taxon>Homo</taxon>
    </lineage>
</organism>
<sequence>MFPLRALWLVWALLGVAGSCPEPCACVDKYAHQFADCAYKELREVPEGLPANVTTLSLSANKITVLRRGAFADVTQVTSLWLAHNEVRTVEPGALAVLSQLKNLDLSHNFISSFPWSDLRNLSALQLLKMNHNRLGSLPRDALGALPDLRSLRINNNRLRTLAPGTFDALSALSHLQLYHNPFHCGCGLVWLQAWAASTRVSLPEPDSIACASPPALQGVPVYRLPALPCAPPSVHLSAEPPLEAPGTPLRAGLAFVLHCIADGHPTPRLQWQLQIPGGTVVLEPPVLSGEDDGVGAEEGEGEGDGDLLTQTQAQTPTPAPAWPAPPATPRFLALANGSLLVPLLSAKEAGVYTCRAHNELGANSTSIRVAVAATGPPKHAPGAGGEPDGQAPTSERKSTAKGRGNSVLPSKPEGKIKGQGLAKVSILGETETEPEEDTSEGEEAEDQILADPAEEQRCGNGDPSRYVSNHAFNQSAELKPHVFELGVIALDVAEREARVQLTPLAARWGPGPGGAGGAPRPGRRPLRLLYLCPAGGGAAVQWSRVEEGVNAYWFRGLRPGTNYSVCLALAGEACHVQVVFSTKKELPSLLVIVAVSVFLLVLATVPLLGAACCHLLAKHPGKPYRLILRPQAPDPMEKRIAADFDPRASYLESEKSYPAGGEAGGEEPEDVQGEGLDEDAEQGDPSGDLQREESLAACSLVESQSKANQEEFEAGSEYSDRLPLGAEAVNIAQEINGNYRQTAG</sequence>
<protein>
    <recommendedName>
        <fullName>Immunoglobulin superfamily containing leucine-rich repeat protein 2</fullName>
    </recommendedName>
    <alternativeName>
        <fullName>Leucine-rich repeat domain and immunoglobulin domain-containing axon extension protein</fullName>
    </alternativeName>
</protein>
<proteinExistence type="evidence at protein level"/>